<proteinExistence type="evidence at protein level"/>
<reference key="1">
    <citation type="journal article" date="1999" name="Eur. J. Biochem.">
        <title>Elapid venom toxins: multiple recruitments of ancient scaffolds.</title>
        <authorList>
            <person name="Alape-Giron A."/>
            <person name="Persson B."/>
            <person name="Cederlund E."/>
            <person name="Flores-Diaz M."/>
            <person name="Gutierrez J.-M."/>
            <person name="Thelestam M."/>
            <person name="Bergman T."/>
            <person name="Joernvall H."/>
        </authorList>
    </citation>
    <scope>PROTEIN SEQUENCE</scope>
    <scope>MASS SPECTROMETRY</scope>
    <source>
        <tissue>Venom</tissue>
    </source>
</reference>
<reference key="2">
    <citation type="journal article" date="1996" name="FEBS Lett.">
        <title>Characterization of multiple nicotinic acetylcholine receptor-binding proteins and phospholipases A2 from the venom of the coral snake Micrurus nigrocinctus.</title>
        <authorList>
            <person name="Alape-Giron A."/>
            <person name="Persson B."/>
            <person name="Cedelund E."/>
            <person name="Flores-Diaz M."/>
            <person name="Gutierrez J.-M."/>
            <person name="Thelestam M."/>
            <person name="Bergman T."/>
            <person name="Joernvall H."/>
        </authorList>
    </citation>
    <scope>PARTIAL PROTEIN SEQUENCE</scope>
    <scope>FUNCTION</scope>
    <source>
        <tissue>Venom</tissue>
    </source>
</reference>
<protein>
    <recommendedName>
        <fullName>Basic phospholipase A2 nigroxin B</fullName>
        <shortName>svPLA2</shortName>
        <ecNumber>3.1.1.4</ecNumber>
    </recommendedName>
    <alternativeName>
        <fullName>Phosphatidylcholine 2-acylhydrolase</fullName>
    </alternativeName>
</protein>
<organism>
    <name type="scientific">Micrurus nigrocinctus</name>
    <name type="common">Central American coral snake</name>
    <name type="synonym">Gargantilla</name>
    <dbReference type="NCBI Taxonomy" id="8635"/>
    <lineage>
        <taxon>Eukaryota</taxon>
        <taxon>Metazoa</taxon>
        <taxon>Chordata</taxon>
        <taxon>Craniata</taxon>
        <taxon>Vertebrata</taxon>
        <taxon>Euteleostomi</taxon>
        <taxon>Lepidosauria</taxon>
        <taxon>Squamata</taxon>
        <taxon>Bifurcata</taxon>
        <taxon>Unidentata</taxon>
        <taxon>Episquamata</taxon>
        <taxon>Toxicofera</taxon>
        <taxon>Serpentes</taxon>
        <taxon>Colubroidea</taxon>
        <taxon>Elapidae</taxon>
        <taxon>Elapinae</taxon>
        <taxon>Micrurus</taxon>
    </lineage>
</organism>
<feature type="chain" id="PRO_0000161662" description="Basic phospholipase A2 nigroxin B">
    <location>
        <begin position="1"/>
        <end position="118"/>
    </location>
</feature>
<feature type="active site" evidence="1">
    <location>
        <position position="46"/>
    </location>
</feature>
<feature type="active site" evidence="1">
    <location>
        <position position="92"/>
    </location>
</feature>
<feature type="binding site" evidence="1">
    <location>
        <position position="26"/>
    </location>
    <ligand>
        <name>Ca(2+)</name>
        <dbReference type="ChEBI" id="CHEBI:29108"/>
    </ligand>
</feature>
<feature type="binding site" evidence="1">
    <location>
        <position position="28"/>
    </location>
    <ligand>
        <name>Ca(2+)</name>
        <dbReference type="ChEBI" id="CHEBI:29108"/>
    </ligand>
</feature>
<feature type="binding site" evidence="1">
    <location>
        <position position="30"/>
    </location>
    <ligand>
        <name>Ca(2+)</name>
        <dbReference type="ChEBI" id="CHEBI:29108"/>
    </ligand>
</feature>
<feature type="binding site" evidence="1">
    <location>
        <position position="47"/>
    </location>
    <ligand>
        <name>Ca(2+)</name>
        <dbReference type="ChEBI" id="CHEBI:29108"/>
    </ligand>
</feature>
<feature type="disulfide bond" evidence="1">
    <location>
        <begin position="11"/>
        <end position="70"/>
    </location>
</feature>
<feature type="disulfide bond" evidence="1">
    <location>
        <begin position="25"/>
        <end position="117"/>
    </location>
</feature>
<feature type="disulfide bond" evidence="1">
    <location>
        <begin position="27"/>
        <end position="43"/>
    </location>
</feature>
<feature type="disulfide bond" evidence="1">
    <location>
        <begin position="42"/>
        <end position="98"/>
    </location>
</feature>
<feature type="disulfide bond" evidence="1">
    <location>
        <begin position="49"/>
        <end position="91"/>
    </location>
</feature>
<feature type="disulfide bond" evidence="1">
    <location>
        <begin position="59"/>
        <end position="84"/>
    </location>
</feature>
<feature type="disulfide bond" evidence="1">
    <location>
        <begin position="77"/>
        <end position="89"/>
    </location>
</feature>
<accession>P81167</accession>
<evidence type="ECO:0000250" key="1"/>
<evidence type="ECO:0000255" key="2">
    <source>
        <dbReference type="PROSITE-ProRule" id="PRU10035"/>
    </source>
</evidence>
<evidence type="ECO:0000255" key="3">
    <source>
        <dbReference type="PROSITE-ProRule" id="PRU10036"/>
    </source>
</evidence>
<evidence type="ECO:0000269" key="4">
    <source>
    </source>
</evidence>
<evidence type="ECO:0000269" key="5">
    <source>
    </source>
</evidence>
<evidence type="ECO:0000305" key="6"/>
<name>PA2BB_MICNI</name>
<sequence length="118" mass="13312">NLIDFKNMIKCTNTRHWVSFTNYGCYCGYGGSGTPVDELDKCCQVHDKCYDTAKHVCKCSPSMTMYSYDCSEGKLTCKDNNTKCKDFVCNCDRTAALCFAKAPYNNKNFKIDPTKGCQ</sequence>
<comment type="function">
    <text evidence="4">Snake venom phospholipase A2 (PLA2) that has only a weak enzymatic activity. It has a myotoxic activity in vivo (dystrophic effect). PLA2 catalyzes the calcium-dependent hydrolysis of the 2-acyl groups in 3-sn-phosphoglycerides.</text>
</comment>
<comment type="catalytic activity">
    <reaction evidence="2 3">
        <text>a 1,2-diacyl-sn-glycero-3-phosphocholine + H2O = a 1-acyl-sn-glycero-3-phosphocholine + a fatty acid + H(+)</text>
        <dbReference type="Rhea" id="RHEA:15801"/>
        <dbReference type="ChEBI" id="CHEBI:15377"/>
        <dbReference type="ChEBI" id="CHEBI:15378"/>
        <dbReference type="ChEBI" id="CHEBI:28868"/>
        <dbReference type="ChEBI" id="CHEBI:57643"/>
        <dbReference type="ChEBI" id="CHEBI:58168"/>
        <dbReference type="EC" id="3.1.1.4"/>
    </reaction>
</comment>
<comment type="cofactor">
    <cofactor evidence="1">
        <name>Ca(2+)</name>
        <dbReference type="ChEBI" id="CHEBI:29108"/>
    </cofactor>
    <text evidence="1">Binds 1 Ca(2+) ion.</text>
</comment>
<comment type="subcellular location">
    <subcellularLocation>
        <location>Secreted</location>
    </subcellularLocation>
</comment>
<comment type="tissue specificity">
    <text>Expressed by the venom gland.</text>
</comment>
<comment type="mass spectrometry" mass="14210.0" method="Electrospray" evidence="5">
    <text>In vitro carboxymethylated.</text>
</comment>
<comment type="similarity">
    <text evidence="6">Belongs to the phospholipase A2 family. Group I subfamily. D49 sub-subfamily.</text>
</comment>
<dbReference type="EC" id="3.1.1.4"/>
<dbReference type="SMR" id="P81167"/>
<dbReference type="GO" id="GO:0005576">
    <property type="term" value="C:extracellular region"/>
    <property type="evidence" value="ECO:0007669"/>
    <property type="project" value="UniProtKB-SubCell"/>
</dbReference>
<dbReference type="GO" id="GO:0005509">
    <property type="term" value="F:calcium ion binding"/>
    <property type="evidence" value="ECO:0007669"/>
    <property type="project" value="InterPro"/>
</dbReference>
<dbReference type="GO" id="GO:0047498">
    <property type="term" value="F:calcium-dependent phospholipase A2 activity"/>
    <property type="evidence" value="ECO:0007669"/>
    <property type="project" value="TreeGrafter"/>
</dbReference>
<dbReference type="GO" id="GO:0005543">
    <property type="term" value="F:phospholipid binding"/>
    <property type="evidence" value="ECO:0007669"/>
    <property type="project" value="TreeGrafter"/>
</dbReference>
<dbReference type="GO" id="GO:0005102">
    <property type="term" value="F:signaling receptor binding"/>
    <property type="evidence" value="ECO:0007669"/>
    <property type="project" value="TreeGrafter"/>
</dbReference>
<dbReference type="GO" id="GO:0090729">
    <property type="term" value="F:toxin activity"/>
    <property type="evidence" value="ECO:0007669"/>
    <property type="project" value="UniProtKB-KW"/>
</dbReference>
<dbReference type="GO" id="GO:0050482">
    <property type="term" value="P:arachidonate secretion"/>
    <property type="evidence" value="ECO:0007669"/>
    <property type="project" value="InterPro"/>
</dbReference>
<dbReference type="GO" id="GO:0006633">
    <property type="term" value="P:fatty acid biosynthetic process"/>
    <property type="evidence" value="ECO:0007669"/>
    <property type="project" value="TreeGrafter"/>
</dbReference>
<dbReference type="GO" id="GO:0016042">
    <property type="term" value="P:lipid catabolic process"/>
    <property type="evidence" value="ECO:0007669"/>
    <property type="project" value="UniProtKB-KW"/>
</dbReference>
<dbReference type="GO" id="GO:0006644">
    <property type="term" value="P:phospholipid metabolic process"/>
    <property type="evidence" value="ECO:0007669"/>
    <property type="project" value="InterPro"/>
</dbReference>
<dbReference type="GO" id="GO:0048146">
    <property type="term" value="P:positive regulation of fibroblast proliferation"/>
    <property type="evidence" value="ECO:0007669"/>
    <property type="project" value="TreeGrafter"/>
</dbReference>
<dbReference type="CDD" id="cd00125">
    <property type="entry name" value="PLA2c"/>
    <property type="match status" value="1"/>
</dbReference>
<dbReference type="FunFam" id="1.20.90.10:FF:000007">
    <property type="entry name" value="Acidic phospholipase A2"/>
    <property type="match status" value="1"/>
</dbReference>
<dbReference type="Gene3D" id="1.20.90.10">
    <property type="entry name" value="Phospholipase A2 domain"/>
    <property type="match status" value="1"/>
</dbReference>
<dbReference type="InterPro" id="IPR001211">
    <property type="entry name" value="PLipase_A2"/>
</dbReference>
<dbReference type="InterPro" id="IPR033112">
    <property type="entry name" value="PLipase_A2_Asp_AS"/>
</dbReference>
<dbReference type="InterPro" id="IPR016090">
    <property type="entry name" value="PLipase_A2_dom"/>
</dbReference>
<dbReference type="InterPro" id="IPR036444">
    <property type="entry name" value="PLipase_A2_dom_sf"/>
</dbReference>
<dbReference type="InterPro" id="IPR033113">
    <property type="entry name" value="PLipase_A2_His_AS"/>
</dbReference>
<dbReference type="PANTHER" id="PTHR11716:SF94">
    <property type="entry name" value="PHOSPHOLIPASE A2"/>
    <property type="match status" value="1"/>
</dbReference>
<dbReference type="PANTHER" id="PTHR11716">
    <property type="entry name" value="PHOSPHOLIPASE A2 FAMILY MEMBER"/>
    <property type="match status" value="1"/>
</dbReference>
<dbReference type="Pfam" id="PF00068">
    <property type="entry name" value="Phospholip_A2_1"/>
    <property type="match status" value="1"/>
</dbReference>
<dbReference type="PRINTS" id="PR00389">
    <property type="entry name" value="PHPHLIPASEA2"/>
</dbReference>
<dbReference type="SMART" id="SM00085">
    <property type="entry name" value="PA2c"/>
    <property type="match status" value="1"/>
</dbReference>
<dbReference type="SUPFAM" id="SSF48619">
    <property type="entry name" value="Phospholipase A2, PLA2"/>
    <property type="match status" value="1"/>
</dbReference>
<dbReference type="PROSITE" id="PS00119">
    <property type="entry name" value="PA2_ASP"/>
    <property type="match status" value="1"/>
</dbReference>
<dbReference type="PROSITE" id="PS00118">
    <property type="entry name" value="PA2_HIS"/>
    <property type="match status" value="1"/>
</dbReference>
<keyword id="KW-0106">Calcium</keyword>
<keyword id="KW-0903">Direct protein sequencing</keyword>
<keyword id="KW-1015">Disulfide bond</keyword>
<keyword id="KW-0378">Hydrolase</keyword>
<keyword id="KW-0442">Lipid degradation</keyword>
<keyword id="KW-0443">Lipid metabolism</keyword>
<keyword id="KW-0479">Metal-binding</keyword>
<keyword id="KW-0959">Myotoxin</keyword>
<keyword id="KW-0964">Secreted</keyword>
<keyword id="KW-0800">Toxin</keyword>